<evidence type="ECO:0000255" key="1">
    <source>
        <dbReference type="HAMAP-Rule" id="MF_01014"/>
    </source>
</evidence>
<gene>
    <name evidence="1" type="primary">hisA</name>
    <name type="ordered locus">RC1_3298</name>
</gene>
<dbReference type="EC" id="5.3.1.16" evidence="1"/>
<dbReference type="EMBL" id="CP000613">
    <property type="protein sequence ID" value="ACJ00660.1"/>
    <property type="molecule type" value="Genomic_DNA"/>
</dbReference>
<dbReference type="RefSeq" id="WP_012568438.1">
    <property type="nucleotide sequence ID" value="NC_011420.2"/>
</dbReference>
<dbReference type="SMR" id="B6IWI6"/>
<dbReference type="STRING" id="414684.RC1_3298"/>
<dbReference type="KEGG" id="rce:RC1_3298"/>
<dbReference type="eggNOG" id="COG0106">
    <property type="taxonomic scope" value="Bacteria"/>
</dbReference>
<dbReference type="HOGENOM" id="CLU_048577_1_1_5"/>
<dbReference type="OrthoDB" id="9807749at2"/>
<dbReference type="UniPathway" id="UPA00031">
    <property type="reaction ID" value="UER00009"/>
</dbReference>
<dbReference type="Proteomes" id="UP000001591">
    <property type="component" value="Chromosome"/>
</dbReference>
<dbReference type="GO" id="GO:0005737">
    <property type="term" value="C:cytoplasm"/>
    <property type="evidence" value="ECO:0007669"/>
    <property type="project" value="UniProtKB-SubCell"/>
</dbReference>
<dbReference type="GO" id="GO:0003949">
    <property type="term" value="F:1-(5-phosphoribosyl)-5-[(5-phosphoribosylamino)methylideneamino]imidazole-4-carboxamide isomerase activity"/>
    <property type="evidence" value="ECO:0007669"/>
    <property type="project" value="UniProtKB-UniRule"/>
</dbReference>
<dbReference type="GO" id="GO:0000105">
    <property type="term" value="P:L-histidine biosynthetic process"/>
    <property type="evidence" value="ECO:0007669"/>
    <property type="project" value="UniProtKB-UniRule"/>
</dbReference>
<dbReference type="GO" id="GO:0000162">
    <property type="term" value="P:L-tryptophan biosynthetic process"/>
    <property type="evidence" value="ECO:0007669"/>
    <property type="project" value="TreeGrafter"/>
</dbReference>
<dbReference type="CDD" id="cd04732">
    <property type="entry name" value="HisA"/>
    <property type="match status" value="1"/>
</dbReference>
<dbReference type="FunFam" id="3.20.20.70:FF:000009">
    <property type="entry name" value="1-(5-phosphoribosyl)-5-[(5-phosphoribosylamino)methylideneamino] imidazole-4-carboxamide isomerase"/>
    <property type="match status" value="1"/>
</dbReference>
<dbReference type="Gene3D" id="3.20.20.70">
    <property type="entry name" value="Aldolase class I"/>
    <property type="match status" value="1"/>
</dbReference>
<dbReference type="HAMAP" id="MF_01014">
    <property type="entry name" value="HisA"/>
    <property type="match status" value="1"/>
</dbReference>
<dbReference type="InterPro" id="IPR013785">
    <property type="entry name" value="Aldolase_TIM"/>
</dbReference>
<dbReference type="InterPro" id="IPR006062">
    <property type="entry name" value="His_biosynth"/>
</dbReference>
<dbReference type="InterPro" id="IPR006063">
    <property type="entry name" value="HisA_bact_arch"/>
</dbReference>
<dbReference type="InterPro" id="IPR044524">
    <property type="entry name" value="Isoase_HisA-like"/>
</dbReference>
<dbReference type="InterPro" id="IPR023016">
    <property type="entry name" value="Isoase_HisA-like_bact"/>
</dbReference>
<dbReference type="InterPro" id="IPR011060">
    <property type="entry name" value="RibuloseP-bd_barrel"/>
</dbReference>
<dbReference type="NCBIfam" id="TIGR00007">
    <property type="entry name" value="1-(5-phosphoribosyl)-5-[(5-phosphoribosylamino)methylideneamino]imidazole-4-carboxamide isomerase"/>
    <property type="match status" value="1"/>
</dbReference>
<dbReference type="PANTHER" id="PTHR43090">
    <property type="entry name" value="1-(5-PHOSPHORIBOSYL)-5-[(5-PHOSPHORIBOSYLAMINO)METHYLIDENEAMINO] IMIDAZOLE-4-CARBOXAMIDE ISOMERASE"/>
    <property type="match status" value="1"/>
</dbReference>
<dbReference type="PANTHER" id="PTHR43090:SF2">
    <property type="entry name" value="1-(5-PHOSPHORIBOSYL)-5-[(5-PHOSPHORIBOSYLAMINO)METHYLIDENEAMINO] IMIDAZOLE-4-CARBOXAMIDE ISOMERASE"/>
    <property type="match status" value="1"/>
</dbReference>
<dbReference type="Pfam" id="PF00977">
    <property type="entry name" value="His_biosynth"/>
    <property type="match status" value="1"/>
</dbReference>
<dbReference type="SUPFAM" id="SSF51366">
    <property type="entry name" value="Ribulose-phoshate binding barrel"/>
    <property type="match status" value="1"/>
</dbReference>
<proteinExistence type="inferred from homology"/>
<keyword id="KW-0028">Amino-acid biosynthesis</keyword>
<keyword id="KW-0963">Cytoplasm</keyword>
<keyword id="KW-0368">Histidine biosynthesis</keyword>
<keyword id="KW-0413">Isomerase</keyword>
<keyword id="KW-1185">Reference proteome</keyword>
<accession>B6IWI6</accession>
<protein>
    <recommendedName>
        <fullName evidence="1">1-(5-phosphoribosyl)-5-[(5-phosphoribosylamino)methylideneamino] imidazole-4-carboxamide isomerase</fullName>
        <ecNumber evidence="1">5.3.1.16</ecNumber>
    </recommendedName>
    <alternativeName>
        <fullName evidence="1">Phosphoribosylformimino-5-aminoimidazole carboxamide ribotide isomerase</fullName>
    </alternativeName>
</protein>
<name>HIS4_RHOCS</name>
<feature type="chain" id="PRO_1000190548" description="1-(5-phosphoribosyl)-5-[(5-phosphoribosylamino)methylideneamino] imidazole-4-carboxamide isomerase">
    <location>
        <begin position="1"/>
        <end position="247"/>
    </location>
</feature>
<feature type="active site" description="Proton acceptor" evidence="1">
    <location>
        <position position="8"/>
    </location>
</feature>
<feature type="active site" description="Proton donor" evidence="1">
    <location>
        <position position="129"/>
    </location>
</feature>
<comment type="catalytic activity">
    <reaction evidence="1">
        <text>1-(5-phospho-beta-D-ribosyl)-5-[(5-phospho-beta-D-ribosylamino)methylideneamino]imidazole-4-carboxamide = 5-[(5-phospho-1-deoxy-D-ribulos-1-ylimino)methylamino]-1-(5-phospho-beta-D-ribosyl)imidazole-4-carboxamide</text>
        <dbReference type="Rhea" id="RHEA:15469"/>
        <dbReference type="ChEBI" id="CHEBI:58435"/>
        <dbReference type="ChEBI" id="CHEBI:58525"/>
        <dbReference type="EC" id="5.3.1.16"/>
    </reaction>
</comment>
<comment type="pathway">
    <text evidence="1">Amino-acid biosynthesis; L-histidine biosynthesis; L-histidine from 5-phospho-alpha-D-ribose 1-diphosphate: step 4/9.</text>
</comment>
<comment type="subcellular location">
    <subcellularLocation>
        <location evidence="1">Cytoplasm</location>
    </subcellularLocation>
</comment>
<comment type="similarity">
    <text evidence="1">Belongs to the HisA/HisF family.</text>
</comment>
<organism>
    <name type="scientific">Rhodospirillum centenum (strain ATCC 51521 / SW)</name>
    <dbReference type="NCBI Taxonomy" id="414684"/>
    <lineage>
        <taxon>Bacteria</taxon>
        <taxon>Pseudomonadati</taxon>
        <taxon>Pseudomonadota</taxon>
        <taxon>Alphaproteobacteria</taxon>
        <taxon>Rhodospirillales</taxon>
        <taxon>Rhodospirillaceae</taxon>
        <taxon>Rhodospirillum</taxon>
    </lineage>
</organism>
<sequence length="247" mass="26155">MNIYPAIDLKDGQAVRLLRGDMDQATVFNPDPAAQAAAFQDQGFRWLHLVDLNGAFAGRPVNADAVSRILERVTIPVQLGGGIRDMATIEEWLGRGIRRVILGTVALRDPDLVKDACRAFPGRICVGIDARDGHVAVEGWATTSDVRALDLALRFEDAGVAAIVYTDINRDGAMGGVNVEATADLAVHLTTPVIASGGVHALSDLLALKAEAETGIEGVIVGRALYDGRIDPRQALALTAGPEDARC</sequence>
<reference key="1">
    <citation type="submission" date="2007-03" db="EMBL/GenBank/DDBJ databases">
        <title>Genome sequence of Rhodospirillum centenum.</title>
        <authorList>
            <person name="Touchman J.W."/>
            <person name="Bauer C."/>
            <person name="Blankenship R.E."/>
        </authorList>
    </citation>
    <scope>NUCLEOTIDE SEQUENCE [LARGE SCALE GENOMIC DNA]</scope>
    <source>
        <strain>ATCC 51521 / SW</strain>
    </source>
</reference>